<keyword id="KW-1003">Cell membrane</keyword>
<keyword id="KW-0472">Membrane</keyword>
<keyword id="KW-1185">Reference proteome</keyword>
<keyword id="KW-0770">Synapse</keyword>
<keyword id="KW-0812">Transmembrane</keyword>
<keyword id="KW-1133">Transmembrane helix</keyword>
<gene>
    <name type="primary">gsg1l</name>
</gene>
<name>GSG1L_XENTR</name>
<reference key="1">
    <citation type="submission" date="2007-03" db="EMBL/GenBank/DDBJ databases">
        <authorList>
            <consortium name="NIH - Xenopus Gene Collection (XGC) project"/>
        </authorList>
    </citation>
    <scope>NUCLEOTIDE SEQUENCE [LARGE SCALE MRNA]</scope>
    <source>
        <tissue>Brain</tissue>
    </source>
</reference>
<sequence length="322" mass="36609">MELSRRNRSLLSVVLNLLALSFSVAAFFTSYWCEGTHKVVKPPCLSAVKSKNCQALALNSSSTGSDATDTNGTLNPNVVHYNWETGDDKYAFKYFHTGFWFSCEKHQGEEACRSFIELSPDSEKGVLWLSVISEFLYIILLSLGFLLMCLEFFSSSNFIDGLKINAFAAIITVLSGLLGMVAHMMYMTVFQVTVNLGPKDWRPQTWYYGWSFGLAWLSFTLCMSASVLTLNTYTKTILEFKYRRRIFEKNVRECNPFLDPEMVRFLWEKYIFSVSSTVEDPFNWHKGFGSPIFVDIGSITDLPGAVKEEERGMDLEDDGDQC</sequence>
<comment type="function">
    <text evidence="1">As a component of the AMPAR complex, modifies AMPA receptor (AMPAR) gating.</text>
</comment>
<comment type="subunit">
    <text evidence="1">Component of the AMPAR complex.</text>
</comment>
<comment type="subcellular location">
    <subcellularLocation>
        <location evidence="1">Cell membrane</location>
        <topology evidence="1">Multi-pass membrane protein</topology>
    </subcellularLocation>
    <subcellularLocation>
        <location evidence="1">Synapse</location>
    </subcellularLocation>
</comment>
<comment type="similarity">
    <text evidence="3">Belongs to the GSG1 family.</text>
</comment>
<protein>
    <recommendedName>
        <fullName>Germ cell-specific gene 1-like protein</fullName>
        <shortName>GSG1-like protein</shortName>
    </recommendedName>
</protein>
<accession>A4IIV4</accession>
<proteinExistence type="evidence at transcript level"/>
<dbReference type="EMBL" id="BC136169">
    <property type="protein sequence ID" value="AAI36170.1"/>
    <property type="molecule type" value="mRNA"/>
</dbReference>
<dbReference type="RefSeq" id="NP_001096452.1">
    <property type="nucleotide sequence ID" value="NM_001102982.1"/>
</dbReference>
<dbReference type="RefSeq" id="XP_012821373.1">
    <property type="nucleotide sequence ID" value="XM_012965919.2"/>
</dbReference>
<dbReference type="RefSeq" id="XP_012821374.1">
    <property type="nucleotide sequence ID" value="XM_012965920.1"/>
</dbReference>
<dbReference type="SMR" id="A4IIV4"/>
<dbReference type="PaxDb" id="8364-ENSXETP00000000253"/>
<dbReference type="DNASU" id="100125068"/>
<dbReference type="GeneID" id="100125068"/>
<dbReference type="KEGG" id="xtr:100125068"/>
<dbReference type="CTD" id="146395"/>
<dbReference type="eggNOG" id="ENOG502RX91">
    <property type="taxonomic scope" value="Eukaryota"/>
</dbReference>
<dbReference type="HOGENOM" id="CLU_063057_0_0_1"/>
<dbReference type="InParanoid" id="A4IIV4"/>
<dbReference type="OMA" id="CKQGALI"/>
<dbReference type="OrthoDB" id="10001768at2759"/>
<dbReference type="PhylomeDB" id="A4IIV4"/>
<dbReference type="TreeFam" id="TF331388"/>
<dbReference type="Proteomes" id="UP000008143">
    <property type="component" value="Chromosome 7"/>
</dbReference>
<dbReference type="Bgee" id="ENSXETG00000000130">
    <property type="expression patterns" value="Expressed in mesonephros and 4 other cell types or tissues"/>
</dbReference>
<dbReference type="GO" id="GO:0005886">
    <property type="term" value="C:plasma membrane"/>
    <property type="evidence" value="ECO:0007669"/>
    <property type="project" value="UniProtKB-SubCell"/>
</dbReference>
<dbReference type="GO" id="GO:0045202">
    <property type="term" value="C:synapse"/>
    <property type="evidence" value="ECO:0007669"/>
    <property type="project" value="UniProtKB-SubCell"/>
</dbReference>
<dbReference type="Gene3D" id="1.20.140.150">
    <property type="match status" value="1"/>
</dbReference>
<dbReference type="InterPro" id="IPR012478">
    <property type="entry name" value="GSG-1"/>
</dbReference>
<dbReference type="InterPro" id="IPR050579">
    <property type="entry name" value="PMP-22/EMP/MP20-like"/>
</dbReference>
<dbReference type="PANTHER" id="PTHR10671">
    <property type="entry name" value="EPITHELIAL MEMBRANE PROTEIN-RELATED"/>
    <property type="match status" value="1"/>
</dbReference>
<dbReference type="PANTHER" id="PTHR10671:SF78">
    <property type="entry name" value="SI:CH211-232M10.6"/>
    <property type="match status" value="1"/>
</dbReference>
<dbReference type="Pfam" id="PF07803">
    <property type="entry name" value="GSG-1"/>
    <property type="match status" value="1"/>
</dbReference>
<evidence type="ECO:0000250" key="1"/>
<evidence type="ECO:0000255" key="2"/>
<evidence type="ECO:0000305" key="3"/>
<feature type="chain" id="PRO_0000329466" description="Germ cell-specific gene 1-like protein">
    <location>
        <begin position="1"/>
        <end position="322"/>
    </location>
</feature>
<feature type="topological domain" description="Cytoplasmic" evidence="2">
    <location>
        <begin position="1"/>
        <end position="8"/>
    </location>
</feature>
<feature type="transmembrane region" description="Helical" evidence="2">
    <location>
        <begin position="9"/>
        <end position="29"/>
    </location>
</feature>
<feature type="topological domain" description="Extracellular" evidence="2">
    <location>
        <begin position="30"/>
        <end position="125"/>
    </location>
</feature>
<feature type="transmembrane region" description="Helical" evidence="2">
    <location>
        <begin position="126"/>
        <end position="146"/>
    </location>
</feature>
<feature type="topological domain" description="Cytoplasmic" evidence="2">
    <location>
        <begin position="147"/>
        <end position="166"/>
    </location>
</feature>
<feature type="transmembrane region" description="Helical" evidence="2">
    <location>
        <begin position="167"/>
        <end position="187"/>
    </location>
</feature>
<feature type="topological domain" description="Extracellular" evidence="2">
    <location>
        <begin position="188"/>
        <end position="209"/>
    </location>
</feature>
<feature type="transmembrane region" description="Helical" evidence="2">
    <location>
        <begin position="210"/>
        <end position="230"/>
    </location>
</feature>
<feature type="topological domain" description="Cytoplasmic" evidence="2">
    <location>
        <begin position="231"/>
        <end position="322"/>
    </location>
</feature>
<organism>
    <name type="scientific">Xenopus tropicalis</name>
    <name type="common">Western clawed frog</name>
    <name type="synonym">Silurana tropicalis</name>
    <dbReference type="NCBI Taxonomy" id="8364"/>
    <lineage>
        <taxon>Eukaryota</taxon>
        <taxon>Metazoa</taxon>
        <taxon>Chordata</taxon>
        <taxon>Craniata</taxon>
        <taxon>Vertebrata</taxon>
        <taxon>Euteleostomi</taxon>
        <taxon>Amphibia</taxon>
        <taxon>Batrachia</taxon>
        <taxon>Anura</taxon>
        <taxon>Pipoidea</taxon>
        <taxon>Pipidae</taxon>
        <taxon>Xenopodinae</taxon>
        <taxon>Xenopus</taxon>
        <taxon>Silurana</taxon>
    </lineage>
</organism>